<gene>
    <name evidence="1" type="primary">argC</name>
    <name type="ordered locus">xcc-b100_1936</name>
</gene>
<dbReference type="EC" id="1.2.1.38" evidence="1"/>
<dbReference type="EMBL" id="AM920689">
    <property type="protein sequence ID" value="CAP51289.1"/>
    <property type="molecule type" value="Genomic_DNA"/>
</dbReference>
<dbReference type="SMR" id="B0RS54"/>
<dbReference type="KEGG" id="xca:xcc-b100_1936"/>
<dbReference type="HOGENOM" id="CLU_006384_3_0_6"/>
<dbReference type="UniPathway" id="UPA00068">
    <property type="reaction ID" value="UER00108"/>
</dbReference>
<dbReference type="Proteomes" id="UP000001188">
    <property type="component" value="Chromosome"/>
</dbReference>
<dbReference type="GO" id="GO:0005737">
    <property type="term" value="C:cytoplasm"/>
    <property type="evidence" value="ECO:0007669"/>
    <property type="project" value="UniProtKB-SubCell"/>
</dbReference>
<dbReference type="GO" id="GO:0003942">
    <property type="term" value="F:N-acetyl-gamma-glutamyl-phosphate reductase activity"/>
    <property type="evidence" value="ECO:0007669"/>
    <property type="project" value="UniProtKB-UniRule"/>
</dbReference>
<dbReference type="GO" id="GO:0051287">
    <property type="term" value="F:NAD binding"/>
    <property type="evidence" value="ECO:0007669"/>
    <property type="project" value="InterPro"/>
</dbReference>
<dbReference type="GO" id="GO:0070401">
    <property type="term" value="F:NADP+ binding"/>
    <property type="evidence" value="ECO:0007669"/>
    <property type="project" value="InterPro"/>
</dbReference>
<dbReference type="GO" id="GO:0006526">
    <property type="term" value="P:L-arginine biosynthetic process"/>
    <property type="evidence" value="ECO:0007669"/>
    <property type="project" value="UniProtKB-UniRule"/>
</dbReference>
<dbReference type="CDD" id="cd23936">
    <property type="entry name" value="AGPR_C_ARG5_6_like"/>
    <property type="match status" value="1"/>
</dbReference>
<dbReference type="CDD" id="cd24149">
    <property type="entry name" value="AGPR_N_ARG5_6_like"/>
    <property type="match status" value="1"/>
</dbReference>
<dbReference type="Gene3D" id="3.30.360.10">
    <property type="entry name" value="Dihydrodipicolinate Reductase, domain 2"/>
    <property type="match status" value="1"/>
</dbReference>
<dbReference type="Gene3D" id="3.40.50.720">
    <property type="entry name" value="NAD(P)-binding Rossmann-like Domain"/>
    <property type="match status" value="1"/>
</dbReference>
<dbReference type="HAMAP" id="MF_00150">
    <property type="entry name" value="ArgC_type1"/>
    <property type="match status" value="1"/>
</dbReference>
<dbReference type="InterPro" id="IPR023013">
    <property type="entry name" value="AGPR_AS"/>
</dbReference>
<dbReference type="InterPro" id="IPR000706">
    <property type="entry name" value="AGPR_type-1"/>
</dbReference>
<dbReference type="InterPro" id="IPR036291">
    <property type="entry name" value="NAD(P)-bd_dom_sf"/>
</dbReference>
<dbReference type="InterPro" id="IPR050085">
    <property type="entry name" value="NAGSA_dehydrogenase"/>
</dbReference>
<dbReference type="InterPro" id="IPR000534">
    <property type="entry name" value="Semialdehyde_DH_NAD-bd"/>
</dbReference>
<dbReference type="NCBIfam" id="TIGR01850">
    <property type="entry name" value="argC"/>
    <property type="match status" value="1"/>
</dbReference>
<dbReference type="PANTHER" id="PTHR32338:SF10">
    <property type="entry name" value="N-ACETYL-GAMMA-GLUTAMYL-PHOSPHATE REDUCTASE, CHLOROPLASTIC-RELATED"/>
    <property type="match status" value="1"/>
</dbReference>
<dbReference type="PANTHER" id="PTHR32338">
    <property type="entry name" value="N-ACETYL-GAMMA-GLUTAMYL-PHOSPHATE REDUCTASE, CHLOROPLASTIC-RELATED-RELATED"/>
    <property type="match status" value="1"/>
</dbReference>
<dbReference type="Pfam" id="PF01118">
    <property type="entry name" value="Semialdhyde_dh"/>
    <property type="match status" value="1"/>
</dbReference>
<dbReference type="Pfam" id="PF22698">
    <property type="entry name" value="Semialdhyde_dhC_1"/>
    <property type="match status" value="1"/>
</dbReference>
<dbReference type="SMART" id="SM00859">
    <property type="entry name" value="Semialdhyde_dh"/>
    <property type="match status" value="1"/>
</dbReference>
<dbReference type="SUPFAM" id="SSF55347">
    <property type="entry name" value="Glyceraldehyde-3-phosphate dehydrogenase-like, C-terminal domain"/>
    <property type="match status" value="1"/>
</dbReference>
<dbReference type="SUPFAM" id="SSF51735">
    <property type="entry name" value="NAD(P)-binding Rossmann-fold domains"/>
    <property type="match status" value="1"/>
</dbReference>
<dbReference type="PROSITE" id="PS01224">
    <property type="entry name" value="ARGC"/>
    <property type="match status" value="1"/>
</dbReference>
<name>ARGC_XANCB</name>
<feature type="chain" id="PRO_1000096748" description="N-acetyl-gamma-glutamyl-phosphate reductase">
    <location>
        <begin position="1"/>
        <end position="316"/>
    </location>
</feature>
<feature type="active site" evidence="1">
    <location>
        <position position="136"/>
    </location>
</feature>
<accession>B0RS54</accession>
<protein>
    <recommendedName>
        <fullName evidence="1">N-acetyl-gamma-glutamyl-phosphate reductase</fullName>
        <shortName evidence="1">AGPR</shortName>
        <ecNumber evidence="1">1.2.1.38</ecNumber>
    </recommendedName>
    <alternativeName>
        <fullName evidence="1">N-acetyl-glutamate semialdehyde dehydrogenase</fullName>
        <shortName evidence="1">NAGSA dehydrogenase</shortName>
    </alternativeName>
</protein>
<sequence length="316" mass="34212">MTVQPTTIGIVGARGHTGAELIKLIAAHPQLQLVFVSSRELAGQRVAEHSDGYQGELRYESLDADAVAAKAADVVILALPNGKAEPFVAAIDASRPQTLLIDLSADYRFDPAWYYGLPELTRHTYAGQRRISNPGCYATAMQLAITPLREQLAGPPQCFGVSGYSGAGTTPSDKNNPALLADNLMPYALTNHMHEREVSAQLGVPVEFMPHVAPHFRGITMTVNLWLQQPLTREQIHARYLERYAHEPLIEIVDEAPWVSRIAGTHGVQIGGFTVAPGNKRVVVVATLDNLLKGAATQAMQNLNLALGWDELTAIG</sequence>
<comment type="function">
    <text evidence="1">Catalyzes the NADPH-dependent reduction of N-acetyl-5-glutamyl phosphate to yield N-acetyl-L-glutamate 5-semialdehyde.</text>
</comment>
<comment type="catalytic activity">
    <reaction evidence="1">
        <text>N-acetyl-L-glutamate 5-semialdehyde + phosphate + NADP(+) = N-acetyl-L-glutamyl 5-phosphate + NADPH + H(+)</text>
        <dbReference type="Rhea" id="RHEA:21588"/>
        <dbReference type="ChEBI" id="CHEBI:15378"/>
        <dbReference type="ChEBI" id="CHEBI:29123"/>
        <dbReference type="ChEBI" id="CHEBI:43474"/>
        <dbReference type="ChEBI" id="CHEBI:57783"/>
        <dbReference type="ChEBI" id="CHEBI:57936"/>
        <dbReference type="ChEBI" id="CHEBI:58349"/>
        <dbReference type="EC" id="1.2.1.38"/>
    </reaction>
</comment>
<comment type="pathway">
    <text evidence="1">Amino-acid biosynthesis; L-arginine biosynthesis; N(2)-acetyl-L-ornithine from L-glutamate: step 3/4.</text>
</comment>
<comment type="subcellular location">
    <subcellularLocation>
        <location evidence="1">Cytoplasm</location>
    </subcellularLocation>
</comment>
<comment type="similarity">
    <text evidence="1">Belongs to the NAGSA dehydrogenase family. Type 1 subfamily.</text>
</comment>
<organism>
    <name type="scientific">Xanthomonas campestris pv. campestris (strain B100)</name>
    <dbReference type="NCBI Taxonomy" id="509169"/>
    <lineage>
        <taxon>Bacteria</taxon>
        <taxon>Pseudomonadati</taxon>
        <taxon>Pseudomonadota</taxon>
        <taxon>Gammaproteobacteria</taxon>
        <taxon>Lysobacterales</taxon>
        <taxon>Lysobacteraceae</taxon>
        <taxon>Xanthomonas</taxon>
    </lineage>
</organism>
<reference key="1">
    <citation type="journal article" date="2008" name="J. Biotechnol.">
        <title>The genome of Xanthomonas campestris pv. campestris B100 and its use for the reconstruction of metabolic pathways involved in xanthan biosynthesis.</title>
        <authorList>
            <person name="Vorhoelter F.-J."/>
            <person name="Schneiker S."/>
            <person name="Goesmann A."/>
            <person name="Krause L."/>
            <person name="Bekel T."/>
            <person name="Kaiser O."/>
            <person name="Linke B."/>
            <person name="Patschkowski T."/>
            <person name="Rueckert C."/>
            <person name="Schmid J."/>
            <person name="Sidhu V.K."/>
            <person name="Sieber V."/>
            <person name="Tauch A."/>
            <person name="Watt S.A."/>
            <person name="Weisshaar B."/>
            <person name="Becker A."/>
            <person name="Niehaus K."/>
            <person name="Puehler A."/>
        </authorList>
    </citation>
    <scope>NUCLEOTIDE SEQUENCE [LARGE SCALE GENOMIC DNA]</scope>
    <source>
        <strain>B100</strain>
    </source>
</reference>
<keyword id="KW-0028">Amino-acid biosynthesis</keyword>
<keyword id="KW-0055">Arginine biosynthesis</keyword>
<keyword id="KW-0963">Cytoplasm</keyword>
<keyword id="KW-0521">NADP</keyword>
<keyword id="KW-0560">Oxidoreductase</keyword>
<evidence type="ECO:0000255" key="1">
    <source>
        <dbReference type="HAMAP-Rule" id="MF_00150"/>
    </source>
</evidence>
<proteinExistence type="inferred from homology"/>